<sequence>MSHEEDLIDYSDEELQTTDAAATTATPAANGGQAKKDGELTVTGGRADKKGSYVGIHSTGFRDFLLKGELLRAITDCGFEHPSEVQQVCIPTAILNVDVLCQAKSGLGKTAVFVLTTLHQLEPVPGECSVLVMCHTRELAYQIKNEYARFSKYLPDVKTAVFYGGTPIQKDIEVLSNKDTFPNIIVGTPGRLNALVRDKKLSLRNVKAFVLDECDKMLDQIDMRRDVQEIFRATPTDKQVMMFSATLSQDVRPICKKFMRNPLEVYVDDDTKLTLHGLQQYYIKLSEAEKNRKLNELLDSLEFNQVIIFVKSTIRANELDKLLRECNFPSIAVHSGRYKEFKEFNKRICVATDVFGRGIDIERINLAINYDLPADADSYLHRVGRAGRFGTKGLSISFVSTPEDEQVLKDIEKRFEVALPEYPEEGVDSSTYMA</sequence>
<dbReference type="EC" id="3.6.4.13"/>
<dbReference type="EMBL" id="AACD01000160">
    <property type="protein sequence ID" value="EAA60271.1"/>
    <property type="status" value="ALT_SEQ"/>
    <property type="molecule type" value="Genomic_DNA"/>
</dbReference>
<dbReference type="EMBL" id="BN001303">
    <property type="protein sequence ID" value="CBF78163.1"/>
    <property type="status" value="ALT_SEQ"/>
    <property type="molecule type" value="Genomic_DNA"/>
</dbReference>
<dbReference type="RefSeq" id="XP_681991.1">
    <property type="nucleotide sequence ID" value="XM_676899.1"/>
</dbReference>
<dbReference type="SMR" id="Q5ASK8"/>
<dbReference type="FunCoup" id="Q5ASK8">
    <property type="interactions" value="1203"/>
</dbReference>
<dbReference type="STRING" id="227321.Q5ASK8"/>
<dbReference type="eggNOG" id="KOG0329">
    <property type="taxonomic scope" value="Eukaryota"/>
</dbReference>
<dbReference type="HOGENOM" id="CLU_003041_1_0_1"/>
<dbReference type="InParanoid" id="Q5ASK8"/>
<dbReference type="Proteomes" id="UP000000560">
    <property type="component" value="Chromosome III"/>
</dbReference>
<dbReference type="GO" id="GO:0005681">
    <property type="term" value="C:spliceosomal complex"/>
    <property type="evidence" value="ECO:0007669"/>
    <property type="project" value="UniProtKB-KW"/>
</dbReference>
<dbReference type="GO" id="GO:0005524">
    <property type="term" value="F:ATP binding"/>
    <property type="evidence" value="ECO:0007669"/>
    <property type="project" value="UniProtKB-KW"/>
</dbReference>
<dbReference type="GO" id="GO:0016887">
    <property type="term" value="F:ATP hydrolysis activity"/>
    <property type="evidence" value="ECO:0007669"/>
    <property type="project" value="RHEA"/>
</dbReference>
<dbReference type="GO" id="GO:0003729">
    <property type="term" value="F:mRNA binding"/>
    <property type="evidence" value="ECO:0000318"/>
    <property type="project" value="GO_Central"/>
</dbReference>
<dbReference type="GO" id="GO:0003724">
    <property type="term" value="F:RNA helicase activity"/>
    <property type="evidence" value="ECO:0000318"/>
    <property type="project" value="GO_Central"/>
</dbReference>
<dbReference type="GO" id="GO:0006406">
    <property type="term" value="P:mRNA export from nucleus"/>
    <property type="evidence" value="ECO:0000318"/>
    <property type="project" value="GO_Central"/>
</dbReference>
<dbReference type="GO" id="GO:0000398">
    <property type="term" value="P:mRNA splicing, via spliceosome"/>
    <property type="evidence" value="ECO:0000318"/>
    <property type="project" value="GO_Central"/>
</dbReference>
<dbReference type="CDD" id="cd17950">
    <property type="entry name" value="DEADc_DDX39"/>
    <property type="match status" value="1"/>
</dbReference>
<dbReference type="CDD" id="cd18787">
    <property type="entry name" value="SF2_C_DEAD"/>
    <property type="match status" value="1"/>
</dbReference>
<dbReference type="FunFam" id="3.40.50.300:FF:000111">
    <property type="entry name" value="DEAD-box ATP-dependent RNA helicase"/>
    <property type="match status" value="1"/>
</dbReference>
<dbReference type="FunFam" id="3.40.50.300:FF:000168">
    <property type="entry name" value="DEAD-box ATP-dependent RNA helicase 56-like"/>
    <property type="match status" value="1"/>
</dbReference>
<dbReference type="Gene3D" id="3.40.50.300">
    <property type="entry name" value="P-loop containing nucleotide triphosphate hydrolases"/>
    <property type="match status" value="2"/>
</dbReference>
<dbReference type="InterPro" id="IPR011545">
    <property type="entry name" value="DEAD/DEAH_box_helicase_dom"/>
</dbReference>
<dbReference type="InterPro" id="IPR014001">
    <property type="entry name" value="Helicase_ATP-bd"/>
</dbReference>
<dbReference type="InterPro" id="IPR001650">
    <property type="entry name" value="Helicase_C-like"/>
</dbReference>
<dbReference type="InterPro" id="IPR027417">
    <property type="entry name" value="P-loop_NTPase"/>
</dbReference>
<dbReference type="InterPro" id="IPR014014">
    <property type="entry name" value="RNA_helicase_DEAD_Q_motif"/>
</dbReference>
<dbReference type="PANTHER" id="PTHR47958">
    <property type="entry name" value="ATP-DEPENDENT RNA HELICASE DBP3"/>
    <property type="match status" value="1"/>
</dbReference>
<dbReference type="Pfam" id="PF00270">
    <property type="entry name" value="DEAD"/>
    <property type="match status" value="1"/>
</dbReference>
<dbReference type="Pfam" id="PF00271">
    <property type="entry name" value="Helicase_C"/>
    <property type="match status" value="1"/>
</dbReference>
<dbReference type="SMART" id="SM00487">
    <property type="entry name" value="DEXDc"/>
    <property type="match status" value="1"/>
</dbReference>
<dbReference type="SMART" id="SM00490">
    <property type="entry name" value="HELICc"/>
    <property type="match status" value="1"/>
</dbReference>
<dbReference type="SUPFAM" id="SSF52540">
    <property type="entry name" value="P-loop containing nucleoside triphosphate hydrolases"/>
    <property type="match status" value="1"/>
</dbReference>
<dbReference type="PROSITE" id="PS51192">
    <property type="entry name" value="HELICASE_ATP_BIND_1"/>
    <property type="match status" value="1"/>
</dbReference>
<dbReference type="PROSITE" id="PS51194">
    <property type="entry name" value="HELICASE_CTER"/>
    <property type="match status" value="1"/>
</dbReference>
<dbReference type="PROSITE" id="PS51195">
    <property type="entry name" value="Q_MOTIF"/>
    <property type="match status" value="1"/>
</dbReference>
<reference key="1">
    <citation type="journal article" date="2005" name="Nature">
        <title>Sequencing of Aspergillus nidulans and comparative analysis with A. fumigatus and A. oryzae.</title>
        <authorList>
            <person name="Galagan J.E."/>
            <person name="Calvo S.E."/>
            <person name="Cuomo C."/>
            <person name="Ma L.-J."/>
            <person name="Wortman J.R."/>
            <person name="Batzoglou S."/>
            <person name="Lee S.-I."/>
            <person name="Bastuerkmen M."/>
            <person name="Spevak C.C."/>
            <person name="Clutterbuck J."/>
            <person name="Kapitonov V."/>
            <person name="Jurka J."/>
            <person name="Scazzocchio C."/>
            <person name="Farman M.L."/>
            <person name="Butler J."/>
            <person name="Purcell S."/>
            <person name="Harris S."/>
            <person name="Braus G.H."/>
            <person name="Draht O."/>
            <person name="Busch S."/>
            <person name="D'Enfert C."/>
            <person name="Bouchier C."/>
            <person name="Goldman G.H."/>
            <person name="Bell-Pedersen D."/>
            <person name="Griffiths-Jones S."/>
            <person name="Doonan J.H."/>
            <person name="Yu J."/>
            <person name="Vienken K."/>
            <person name="Pain A."/>
            <person name="Freitag M."/>
            <person name="Selker E.U."/>
            <person name="Archer D.B."/>
            <person name="Penalva M.A."/>
            <person name="Oakley B.R."/>
            <person name="Momany M."/>
            <person name="Tanaka T."/>
            <person name="Kumagai T."/>
            <person name="Asai K."/>
            <person name="Machida M."/>
            <person name="Nierman W.C."/>
            <person name="Denning D.W."/>
            <person name="Caddick M.X."/>
            <person name="Hynes M."/>
            <person name="Paoletti M."/>
            <person name="Fischer R."/>
            <person name="Miller B.L."/>
            <person name="Dyer P.S."/>
            <person name="Sachs M.S."/>
            <person name="Osmani S.A."/>
            <person name="Birren B.W."/>
        </authorList>
    </citation>
    <scope>NUCLEOTIDE SEQUENCE [LARGE SCALE GENOMIC DNA]</scope>
    <source>
        <strain>FGSC A4 / ATCC 38163 / CBS 112.46 / NRRL 194 / M139</strain>
    </source>
</reference>
<reference key="2">
    <citation type="journal article" date="2009" name="Fungal Genet. Biol.">
        <title>The 2008 update of the Aspergillus nidulans genome annotation: a community effort.</title>
        <authorList>
            <person name="Wortman J.R."/>
            <person name="Gilsenan J.M."/>
            <person name="Joardar V."/>
            <person name="Deegan J."/>
            <person name="Clutterbuck J."/>
            <person name="Andersen M.R."/>
            <person name="Archer D."/>
            <person name="Bencina M."/>
            <person name="Braus G."/>
            <person name="Coutinho P."/>
            <person name="von Dohren H."/>
            <person name="Doonan J."/>
            <person name="Driessen A.J."/>
            <person name="Durek P."/>
            <person name="Espeso E."/>
            <person name="Fekete E."/>
            <person name="Flipphi M."/>
            <person name="Estrada C.G."/>
            <person name="Geysens S."/>
            <person name="Goldman G."/>
            <person name="de Groot P.W."/>
            <person name="Hansen K."/>
            <person name="Harris S.D."/>
            <person name="Heinekamp T."/>
            <person name="Helmstaedt K."/>
            <person name="Henrissat B."/>
            <person name="Hofmann G."/>
            <person name="Homan T."/>
            <person name="Horio T."/>
            <person name="Horiuchi H."/>
            <person name="James S."/>
            <person name="Jones M."/>
            <person name="Karaffa L."/>
            <person name="Karanyi Z."/>
            <person name="Kato M."/>
            <person name="Keller N."/>
            <person name="Kelly D.E."/>
            <person name="Kiel J.A."/>
            <person name="Kim J.M."/>
            <person name="van der Klei I.J."/>
            <person name="Klis F.M."/>
            <person name="Kovalchuk A."/>
            <person name="Krasevec N."/>
            <person name="Kubicek C.P."/>
            <person name="Liu B."/>
            <person name="Maccabe A."/>
            <person name="Meyer V."/>
            <person name="Mirabito P."/>
            <person name="Miskei M."/>
            <person name="Mos M."/>
            <person name="Mullins J."/>
            <person name="Nelson D.R."/>
            <person name="Nielsen J."/>
            <person name="Oakley B.R."/>
            <person name="Osmani S.A."/>
            <person name="Pakula T."/>
            <person name="Paszewski A."/>
            <person name="Paulsen I."/>
            <person name="Pilsyk S."/>
            <person name="Pocsi I."/>
            <person name="Punt P.J."/>
            <person name="Ram A.F."/>
            <person name="Ren Q."/>
            <person name="Robellet X."/>
            <person name="Robson G."/>
            <person name="Seiboth B."/>
            <person name="van Solingen P."/>
            <person name="Specht T."/>
            <person name="Sun J."/>
            <person name="Taheri-Talesh N."/>
            <person name="Takeshita N."/>
            <person name="Ussery D."/>
            <person name="vanKuyk P.A."/>
            <person name="Visser H."/>
            <person name="van de Vondervoort P.J."/>
            <person name="de Vries R.P."/>
            <person name="Walton J."/>
            <person name="Xiang X."/>
            <person name="Xiong Y."/>
            <person name="Zeng A.P."/>
            <person name="Brandt B.W."/>
            <person name="Cornell M.J."/>
            <person name="van den Hondel C.A."/>
            <person name="Visser J."/>
            <person name="Oliver S.G."/>
            <person name="Turner G."/>
        </authorList>
    </citation>
    <scope>GENOME REANNOTATION</scope>
    <source>
        <strain>FGSC A4 / ATCC 38163 / CBS 112.46 / NRRL 194 / M139</strain>
    </source>
</reference>
<protein>
    <recommendedName>
        <fullName>ATP-dependent RNA helicase sub2</fullName>
        <ecNumber>3.6.4.13</ecNumber>
    </recommendedName>
</protein>
<proteinExistence type="inferred from homology"/>
<feature type="chain" id="PRO_0000232265" description="ATP-dependent RNA helicase sub2">
    <location>
        <begin position="1"/>
        <end position="434"/>
    </location>
</feature>
<feature type="domain" description="Helicase ATP-binding" evidence="2">
    <location>
        <begin position="90"/>
        <end position="265"/>
    </location>
</feature>
<feature type="domain" description="Helicase C-terminal" evidence="3">
    <location>
        <begin position="293"/>
        <end position="430"/>
    </location>
</feature>
<feature type="short sequence motif" description="Q motif">
    <location>
        <begin position="59"/>
        <end position="87"/>
    </location>
</feature>
<feature type="short sequence motif" description="DECD box">
    <location>
        <begin position="212"/>
        <end position="215"/>
    </location>
</feature>
<feature type="binding site" evidence="2">
    <location>
        <begin position="103"/>
        <end position="110"/>
    </location>
    <ligand>
        <name>ATP</name>
        <dbReference type="ChEBI" id="CHEBI:30616"/>
    </ligand>
</feature>
<accession>Q5ASK8</accession>
<accession>C8VA23</accession>
<evidence type="ECO:0000250" key="1"/>
<evidence type="ECO:0000255" key="2">
    <source>
        <dbReference type="PROSITE-ProRule" id="PRU00541"/>
    </source>
</evidence>
<evidence type="ECO:0000255" key="3">
    <source>
        <dbReference type="PROSITE-ProRule" id="PRU00542"/>
    </source>
</evidence>
<evidence type="ECO:0000305" key="4"/>
<name>SUB2_EMENI</name>
<keyword id="KW-0067">ATP-binding</keyword>
<keyword id="KW-0347">Helicase</keyword>
<keyword id="KW-0378">Hydrolase</keyword>
<keyword id="KW-0507">mRNA processing</keyword>
<keyword id="KW-0508">mRNA splicing</keyword>
<keyword id="KW-0509">mRNA transport</keyword>
<keyword id="KW-0547">Nucleotide-binding</keyword>
<keyword id="KW-0539">Nucleus</keyword>
<keyword id="KW-1185">Reference proteome</keyword>
<keyword id="KW-0694">RNA-binding</keyword>
<keyword id="KW-0747">Spliceosome</keyword>
<keyword id="KW-0813">Transport</keyword>
<comment type="function">
    <text evidence="1">ATP-binding RNA helicase involved in transcription elongation and required for the export of mRNA out of the nucleus. SUB2 also plays a role in pre-mRNA splicing and spliceosome assembly. May be involved in rDNA and telomeric silencing, and maintenance of genome integrity (By similarity).</text>
</comment>
<comment type="catalytic activity">
    <reaction>
        <text>ATP + H2O = ADP + phosphate + H(+)</text>
        <dbReference type="Rhea" id="RHEA:13065"/>
        <dbReference type="ChEBI" id="CHEBI:15377"/>
        <dbReference type="ChEBI" id="CHEBI:15378"/>
        <dbReference type="ChEBI" id="CHEBI:30616"/>
        <dbReference type="ChEBI" id="CHEBI:43474"/>
        <dbReference type="ChEBI" id="CHEBI:456216"/>
        <dbReference type="EC" id="3.6.4.13"/>
    </reaction>
</comment>
<comment type="subcellular location">
    <subcellularLocation>
        <location evidence="1">Nucleus</location>
    </subcellularLocation>
</comment>
<comment type="domain">
    <text>The Q motif is unique to and characteristic of the DEAD box family of RNA helicases and controls ATP binding and hydrolysis.</text>
</comment>
<comment type="similarity">
    <text evidence="4">Belongs to the DEAD box helicase family. DECD subfamily.</text>
</comment>
<comment type="sequence caution" evidence="4">
    <conflict type="erroneous gene model prediction">
        <sequence resource="EMBL-CDS" id="CBF78163"/>
    </conflict>
</comment>
<comment type="sequence caution" evidence="4">
    <conflict type="erroneous gene model prediction">
        <sequence resource="EMBL-CDS" id="EAA60271"/>
    </conflict>
</comment>
<gene>
    <name type="primary">sub2</name>
    <name type="ORF">AN8722</name>
</gene>
<organism>
    <name type="scientific">Emericella nidulans (strain FGSC A4 / ATCC 38163 / CBS 112.46 / NRRL 194 / M139)</name>
    <name type="common">Aspergillus nidulans</name>
    <dbReference type="NCBI Taxonomy" id="227321"/>
    <lineage>
        <taxon>Eukaryota</taxon>
        <taxon>Fungi</taxon>
        <taxon>Dikarya</taxon>
        <taxon>Ascomycota</taxon>
        <taxon>Pezizomycotina</taxon>
        <taxon>Eurotiomycetes</taxon>
        <taxon>Eurotiomycetidae</taxon>
        <taxon>Eurotiales</taxon>
        <taxon>Aspergillaceae</taxon>
        <taxon>Aspergillus</taxon>
        <taxon>Aspergillus subgen. Nidulantes</taxon>
    </lineage>
</organism>